<dbReference type="EC" id="5.5.1.6"/>
<dbReference type="EMBL" id="DQ191402">
    <property type="protein sequence ID" value="ABA86741.1"/>
    <property type="molecule type" value="Genomic_DNA"/>
</dbReference>
<dbReference type="EMBL" id="DQ191404">
    <property type="protein sequence ID" value="ABA86743.1"/>
    <property type="molecule type" value="mRNA"/>
</dbReference>
<dbReference type="SMR" id="A7ISP5"/>
<dbReference type="InParanoid" id="A7ISP5"/>
<dbReference type="UniPathway" id="UPA00154"/>
<dbReference type="Proteomes" id="UP000008827">
    <property type="component" value="Unplaced"/>
</dbReference>
<dbReference type="GO" id="GO:0045430">
    <property type="term" value="F:chalcone isomerase activity"/>
    <property type="evidence" value="ECO:0007669"/>
    <property type="project" value="UniProtKB-EC"/>
</dbReference>
<dbReference type="GO" id="GO:0009813">
    <property type="term" value="P:flavonoid biosynthetic process"/>
    <property type="evidence" value="ECO:0007669"/>
    <property type="project" value="UniProtKB-UniPathway"/>
</dbReference>
<dbReference type="Gene3D" id="1.10.890.20">
    <property type="match status" value="1"/>
</dbReference>
<dbReference type="Gene3D" id="3.50.70.10">
    <property type="match status" value="1"/>
</dbReference>
<dbReference type="InterPro" id="IPR044164">
    <property type="entry name" value="CFI"/>
</dbReference>
<dbReference type="InterPro" id="IPR016087">
    <property type="entry name" value="Chalcone_isomerase"/>
</dbReference>
<dbReference type="InterPro" id="IPR016088">
    <property type="entry name" value="Chalcone_isomerase_3-sand"/>
</dbReference>
<dbReference type="InterPro" id="IPR016089">
    <property type="entry name" value="Chalcone_isomerase_bundle_sf"/>
</dbReference>
<dbReference type="InterPro" id="IPR036298">
    <property type="entry name" value="Chalcone_isomerase_sf"/>
</dbReference>
<dbReference type="PANTHER" id="PTHR28039:SF9">
    <property type="entry name" value="CHALCONE--FLAVANONE ISOMERASE 1B-1"/>
    <property type="match status" value="1"/>
</dbReference>
<dbReference type="PANTHER" id="PTHR28039">
    <property type="entry name" value="CHALCONE--FLAVONONE ISOMERASE 1-RELATED"/>
    <property type="match status" value="1"/>
</dbReference>
<dbReference type="Pfam" id="PF02431">
    <property type="entry name" value="Chalcone"/>
    <property type="match status" value="1"/>
</dbReference>
<dbReference type="SUPFAM" id="SSF54626">
    <property type="entry name" value="Chalcone isomerase"/>
    <property type="match status" value="1"/>
</dbReference>
<evidence type="ECO:0000250" key="1"/>
<evidence type="ECO:0000305" key="2"/>
<proteinExistence type="evidence at transcript level"/>
<organism>
    <name type="scientific">Glycine max</name>
    <name type="common">Soybean</name>
    <name type="synonym">Glycine hispida</name>
    <dbReference type="NCBI Taxonomy" id="3847"/>
    <lineage>
        <taxon>Eukaryota</taxon>
        <taxon>Viridiplantae</taxon>
        <taxon>Streptophyta</taxon>
        <taxon>Embryophyta</taxon>
        <taxon>Tracheophyta</taxon>
        <taxon>Spermatophyta</taxon>
        <taxon>Magnoliopsida</taxon>
        <taxon>eudicotyledons</taxon>
        <taxon>Gunneridae</taxon>
        <taxon>Pentapetalae</taxon>
        <taxon>rosids</taxon>
        <taxon>fabids</taxon>
        <taxon>Fabales</taxon>
        <taxon>Fabaceae</taxon>
        <taxon>Papilionoideae</taxon>
        <taxon>50 kb inversion clade</taxon>
        <taxon>NPAAA clade</taxon>
        <taxon>indigoferoid/millettioid clade</taxon>
        <taxon>Phaseoleae</taxon>
        <taxon>Glycine</taxon>
        <taxon>Glycine subgen. Soja</taxon>
    </lineage>
</organism>
<name>CFI2B_SOYBN</name>
<comment type="function">
    <text evidence="1">Catalyzes the intramolecular cyclization of bicyclic chalcones into tricyclic (S)-flavanones. Responsible for the isomerization of 4,2',4',6'-tetrahydroxychalcone (also termed chalcone) into naringenin (By similarity).</text>
</comment>
<comment type="catalytic activity">
    <reaction>
        <text>a chalcone = a flavanone.</text>
        <dbReference type="EC" id="5.5.1.6"/>
    </reaction>
</comment>
<comment type="pathway">
    <text>Secondary metabolite biosynthesis; flavonoid biosynthesis.</text>
</comment>
<comment type="miscellaneous">
    <text>Part of the biosynthetic pathway for all classes of flavonoids, a large class of secondary plant metabolites, many of which are brightly colored.</text>
</comment>
<comment type="similarity">
    <text evidence="2">Belongs to the chalcone isomerase family.</text>
</comment>
<reference key="1">
    <citation type="submission" date="2005-09" db="EMBL/GenBank/DDBJ databases">
        <title>Molecular cloning of genes encoding two types of chalcone isomerase in soybean (Glycine max).</title>
        <authorList>
            <person name="Liao R.-M."/>
            <person name="Chiu M.-H."/>
            <person name="Chen S.-H."/>
            <person name="Chu T.-M."/>
            <person name="Wang C.-S."/>
        </authorList>
    </citation>
    <scope>NUCLEOTIDE SEQUENCE [GENOMIC DNA / MRNA]</scope>
    <source>
        <strain>cv. L66-14</strain>
        <tissue>Seed coat</tissue>
    </source>
</reference>
<gene>
    <name type="primary">CHI2-B</name>
</gene>
<keyword id="KW-0284">Flavonoid biosynthesis</keyword>
<keyword id="KW-0413">Isomerase</keyword>
<keyword id="KW-1185">Reference proteome</keyword>
<feature type="chain" id="PRO_0000314573" description="Chalcone--flavanone isomerase 2-B">
    <location>
        <begin position="1"/>
        <end position="227"/>
    </location>
</feature>
<feature type="binding site" evidence="1">
    <location>
        <position position="50"/>
    </location>
    <ligand>
        <name>substrate</name>
    </ligand>
</feature>
<feature type="binding site" evidence="1">
    <location>
        <position position="115"/>
    </location>
    <ligand>
        <name>substrate</name>
    </ligand>
</feature>
<feature type="binding site" evidence="1">
    <location>
        <position position="193"/>
    </location>
    <ligand>
        <name>substrate</name>
    </ligand>
</feature>
<feature type="site" description="Important for catalytic activity" evidence="1">
    <location>
        <position position="108"/>
    </location>
</feature>
<protein>
    <recommendedName>
        <fullName>Chalcone--flavanone isomerase 2-B</fullName>
        <shortName>Chalcone isomerase 2-B</shortName>
        <ecNumber>5.5.1.6</ecNumber>
    </recommendedName>
</protein>
<accession>A7ISP5</accession>
<sequence>MATPASITNVTVEFLQFPALVTPPGSTKSYFLGGAGVRGLNIQEEFVKFTGIGVYLEDKAVSSLAAKWKGKSAAELLDSLDFYRDIIKGPFEKLIRGSKLRTLDGREYVRKVSENCVAHMQSVGTYSDEEEKAIEEFRNAFKDQNFPPGSTVFYKQSPTGTLGQLIFSKDETIPEHEHAVIDNKPLSEAVLETMIGEIPVSPALKESLATRFHQFFKELEANPNIEN</sequence>